<comment type="function">
    <text evidence="1">Catalyzes the formation of the alpha-1,6-glucosidic linkages in glycogen by scission of a 1,4-alpha-linked oligosaccharide from growing alpha-1,4-glucan chains and the subsequent attachment of the oligosaccharide to the alpha-1,6 position.</text>
</comment>
<comment type="catalytic activity">
    <reaction evidence="1">
        <text>Transfers a segment of a (1-&gt;4)-alpha-D-glucan chain to a primary hydroxy group in a similar glucan chain.</text>
        <dbReference type="EC" id="2.4.1.18"/>
    </reaction>
</comment>
<comment type="pathway">
    <text evidence="1">Glycan biosynthesis; glycogen biosynthesis.</text>
</comment>
<comment type="subunit">
    <text evidence="1">Monomer.</text>
</comment>
<comment type="similarity">
    <text evidence="1">Belongs to the glycosyl hydrolase 13 family. GlgB subfamily.</text>
</comment>
<evidence type="ECO:0000255" key="1">
    <source>
        <dbReference type="HAMAP-Rule" id="MF_00685"/>
    </source>
</evidence>
<evidence type="ECO:0000256" key="2">
    <source>
        <dbReference type="SAM" id="MobiDB-lite"/>
    </source>
</evidence>
<sequence length="645" mass="76099">MSVINCEEVKRDEFHTEKYYESYNIFGAHIVTEDEMRGVRFTVWAPHAKAMSVVGDFNEWDYEQHKMLQVTEEGIWSLFIPHIEEREIYKYAIETMAGDVIFKADPYAVYAEVRPNTASVVFDIKGYEWNDKNWSRKKKKKSVYKEAMTVYELHFGSWKKKEDGTLYSYREMAEELIPYVVEHQFTHIEIMPLVEHPYDRSWGYQGTGYYAATSRFGTPHDLMHFVDECHKYGIGVILDWVPGHFCKDAHGLYLFDGTPTYEYKDKDVQENPVWGTVNFDLGKREVRNFLISNALFWMRYFHIDGFRVDAVANMLYWNKEGQEQSNEHAVSFLRELNEAVFAEDEDFLMTAEDSTAWPLVTAPTYEGGLGFNYKWNMGWMNDVLKYMECAPEYRKYIHDKMTFSLLYAYSENFILPLSHDEVVHGKKSLLNKMPGDYWDKFAQLRLLYGYFFTHPGKKLLFMGGEFGQFDEWKDLEDLDWNLHDFEMHRYMHDYFKELIALYKRSKPLWQLDHSREGFQWIDANNNEQSIFSFIRQGDKQEDALVVVCNFTKATYENYKVGVPDFEYYNEVLNSDAEQYGGSGQVNKKRLKTFQEPYHNQTAHVEITIPPFGVSILRPVKTRKGSKKQDGSKTKVRSNVTSRGKR</sequence>
<dbReference type="EC" id="2.4.1.18" evidence="1"/>
<dbReference type="EMBL" id="CP001215">
    <property type="protein sequence ID" value="ACP13464.1"/>
    <property type="molecule type" value="Genomic_DNA"/>
</dbReference>
<dbReference type="RefSeq" id="WP_000111381.1">
    <property type="nucleotide sequence ID" value="NC_012581.1"/>
</dbReference>
<dbReference type="SMR" id="C3LC26"/>
<dbReference type="CAZy" id="CBM48">
    <property type="family name" value="Carbohydrate-Binding Module Family 48"/>
</dbReference>
<dbReference type="CAZy" id="GH13">
    <property type="family name" value="Glycoside Hydrolase Family 13"/>
</dbReference>
<dbReference type="GeneID" id="45024728"/>
<dbReference type="KEGG" id="bah:BAMEG_5156"/>
<dbReference type="HOGENOM" id="CLU_004245_4_0_9"/>
<dbReference type="UniPathway" id="UPA00164"/>
<dbReference type="GO" id="GO:0005829">
    <property type="term" value="C:cytosol"/>
    <property type="evidence" value="ECO:0007669"/>
    <property type="project" value="TreeGrafter"/>
</dbReference>
<dbReference type="GO" id="GO:0003844">
    <property type="term" value="F:1,4-alpha-glucan branching enzyme activity"/>
    <property type="evidence" value="ECO:0007669"/>
    <property type="project" value="UniProtKB-UniRule"/>
</dbReference>
<dbReference type="GO" id="GO:0043169">
    <property type="term" value="F:cation binding"/>
    <property type="evidence" value="ECO:0007669"/>
    <property type="project" value="InterPro"/>
</dbReference>
<dbReference type="GO" id="GO:0004553">
    <property type="term" value="F:hydrolase activity, hydrolyzing O-glycosyl compounds"/>
    <property type="evidence" value="ECO:0007669"/>
    <property type="project" value="InterPro"/>
</dbReference>
<dbReference type="GO" id="GO:0005978">
    <property type="term" value="P:glycogen biosynthetic process"/>
    <property type="evidence" value="ECO:0007669"/>
    <property type="project" value="UniProtKB-UniRule"/>
</dbReference>
<dbReference type="CDD" id="cd11322">
    <property type="entry name" value="AmyAc_Glg_BE"/>
    <property type="match status" value="1"/>
</dbReference>
<dbReference type="CDD" id="cd02855">
    <property type="entry name" value="E_set_GBE_prok_N"/>
    <property type="match status" value="1"/>
</dbReference>
<dbReference type="FunFam" id="2.60.40.10:FF:000169">
    <property type="entry name" value="1,4-alpha-glucan branching enzyme GlgB"/>
    <property type="match status" value="1"/>
</dbReference>
<dbReference type="FunFam" id="2.60.40.1180:FF:000002">
    <property type="entry name" value="1,4-alpha-glucan branching enzyme GlgB"/>
    <property type="match status" value="1"/>
</dbReference>
<dbReference type="FunFam" id="3.20.20.80:FF:000003">
    <property type="entry name" value="1,4-alpha-glucan branching enzyme GlgB"/>
    <property type="match status" value="1"/>
</dbReference>
<dbReference type="Gene3D" id="3.20.20.80">
    <property type="entry name" value="Glycosidases"/>
    <property type="match status" value="1"/>
</dbReference>
<dbReference type="Gene3D" id="2.60.40.1180">
    <property type="entry name" value="Golgi alpha-mannosidase II"/>
    <property type="match status" value="1"/>
</dbReference>
<dbReference type="Gene3D" id="2.60.40.10">
    <property type="entry name" value="Immunoglobulins"/>
    <property type="match status" value="1"/>
</dbReference>
<dbReference type="HAMAP" id="MF_00685">
    <property type="entry name" value="GlgB"/>
    <property type="match status" value="1"/>
</dbReference>
<dbReference type="InterPro" id="IPR006048">
    <property type="entry name" value="A-amylase/branching_C"/>
</dbReference>
<dbReference type="InterPro" id="IPR037439">
    <property type="entry name" value="Branching_enzy"/>
</dbReference>
<dbReference type="InterPro" id="IPR006407">
    <property type="entry name" value="GlgB"/>
</dbReference>
<dbReference type="InterPro" id="IPR044143">
    <property type="entry name" value="GlgB_N_E_set_prok"/>
</dbReference>
<dbReference type="InterPro" id="IPR006047">
    <property type="entry name" value="Glyco_hydro_13_cat_dom"/>
</dbReference>
<dbReference type="InterPro" id="IPR004193">
    <property type="entry name" value="Glyco_hydro_13_N"/>
</dbReference>
<dbReference type="InterPro" id="IPR013780">
    <property type="entry name" value="Glyco_hydro_b"/>
</dbReference>
<dbReference type="InterPro" id="IPR017853">
    <property type="entry name" value="Glycoside_hydrolase_SF"/>
</dbReference>
<dbReference type="InterPro" id="IPR013783">
    <property type="entry name" value="Ig-like_fold"/>
</dbReference>
<dbReference type="NCBIfam" id="TIGR01515">
    <property type="entry name" value="branching_enzym"/>
    <property type="match status" value="1"/>
</dbReference>
<dbReference type="NCBIfam" id="NF003811">
    <property type="entry name" value="PRK05402.1"/>
    <property type="match status" value="1"/>
</dbReference>
<dbReference type="NCBIfam" id="NF008967">
    <property type="entry name" value="PRK12313.1"/>
    <property type="match status" value="1"/>
</dbReference>
<dbReference type="PANTHER" id="PTHR43651">
    <property type="entry name" value="1,4-ALPHA-GLUCAN-BRANCHING ENZYME"/>
    <property type="match status" value="1"/>
</dbReference>
<dbReference type="PANTHER" id="PTHR43651:SF3">
    <property type="entry name" value="1,4-ALPHA-GLUCAN-BRANCHING ENZYME"/>
    <property type="match status" value="1"/>
</dbReference>
<dbReference type="Pfam" id="PF00128">
    <property type="entry name" value="Alpha-amylase"/>
    <property type="match status" value="2"/>
</dbReference>
<dbReference type="Pfam" id="PF02806">
    <property type="entry name" value="Alpha-amylase_C"/>
    <property type="match status" value="1"/>
</dbReference>
<dbReference type="Pfam" id="PF02922">
    <property type="entry name" value="CBM_48"/>
    <property type="match status" value="1"/>
</dbReference>
<dbReference type="PIRSF" id="PIRSF000463">
    <property type="entry name" value="GlgB"/>
    <property type="match status" value="1"/>
</dbReference>
<dbReference type="SMART" id="SM00642">
    <property type="entry name" value="Aamy"/>
    <property type="match status" value="1"/>
</dbReference>
<dbReference type="SUPFAM" id="SSF51445">
    <property type="entry name" value="(Trans)glycosidases"/>
    <property type="match status" value="1"/>
</dbReference>
<dbReference type="SUPFAM" id="SSF51011">
    <property type="entry name" value="Glycosyl hydrolase domain"/>
    <property type="match status" value="1"/>
</dbReference>
<feature type="chain" id="PRO_1000147756" description="1,4-alpha-glucan branching enzyme GlgB">
    <location>
        <begin position="1"/>
        <end position="645"/>
    </location>
</feature>
<feature type="region of interest" description="Disordered" evidence="2">
    <location>
        <begin position="619"/>
        <end position="645"/>
    </location>
</feature>
<feature type="compositionally biased region" description="Polar residues" evidence="2">
    <location>
        <begin position="636"/>
        <end position="645"/>
    </location>
</feature>
<feature type="active site" description="Nucleophile" evidence="1">
    <location>
        <position position="309"/>
    </location>
</feature>
<feature type="active site" description="Proton donor" evidence="1">
    <location>
        <position position="352"/>
    </location>
</feature>
<name>GLGB_BACAC</name>
<proteinExistence type="inferred from homology"/>
<accession>C3LC26</accession>
<keyword id="KW-0119">Carbohydrate metabolism</keyword>
<keyword id="KW-0320">Glycogen biosynthesis</keyword>
<keyword id="KW-0321">Glycogen metabolism</keyword>
<keyword id="KW-0328">Glycosyltransferase</keyword>
<keyword id="KW-0808">Transferase</keyword>
<reference key="1">
    <citation type="submission" date="2008-10" db="EMBL/GenBank/DDBJ databases">
        <title>Genome sequence of Bacillus anthracis str. CDC 684.</title>
        <authorList>
            <person name="Dodson R.J."/>
            <person name="Munk A.C."/>
            <person name="Brettin T."/>
            <person name="Bruce D."/>
            <person name="Detter C."/>
            <person name="Tapia R."/>
            <person name="Han C."/>
            <person name="Sutton G."/>
            <person name="Sims D."/>
        </authorList>
    </citation>
    <scope>NUCLEOTIDE SEQUENCE [LARGE SCALE GENOMIC DNA]</scope>
    <source>
        <strain>CDC 684 / NRRL 3495</strain>
    </source>
</reference>
<gene>
    <name evidence="1" type="primary">glgB</name>
    <name type="ordered locus">BAMEG_5156</name>
</gene>
<organism>
    <name type="scientific">Bacillus anthracis (strain CDC 684 / NRRL 3495)</name>
    <dbReference type="NCBI Taxonomy" id="568206"/>
    <lineage>
        <taxon>Bacteria</taxon>
        <taxon>Bacillati</taxon>
        <taxon>Bacillota</taxon>
        <taxon>Bacilli</taxon>
        <taxon>Bacillales</taxon>
        <taxon>Bacillaceae</taxon>
        <taxon>Bacillus</taxon>
        <taxon>Bacillus cereus group</taxon>
    </lineage>
</organism>
<protein>
    <recommendedName>
        <fullName evidence="1">1,4-alpha-glucan branching enzyme GlgB</fullName>
        <ecNumber evidence="1">2.4.1.18</ecNumber>
    </recommendedName>
    <alternativeName>
        <fullName evidence="1">1,4-alpha-D-glucan:1,4-alpha-D-glucan 6-glucosyl-transferase</fullName>
    </alternativeName>
    <alternativeName>
        <fullName evidence="1">Alpha-(1-&gt;4)-glucan branching enzyme</fullName>
    </alternativeName>
    <alternativeName>
        <fullName evidence="1">Glycogen branching enzyme</fullName>
        <shortName evidence="1">BE</shortName>
    </alternativeName>
</protein>